<protein>
    <recommendedName>
        <fullName evidence="1">Small ribosomal subunit protein uS5</fullName>
    </recommendedName>
    <alternativeName>
        <fullName evidence="2">30S ribosomal protein S5</fullName>
    </alternativeName>
</protein>
<name>RS5_LACP3</name>
<evidence type="ECO:0000255" key="1">
    <source>
        <dbReference type="HAMAP-Rule" id="MF_01307"/>
    </source>
</evidence>
<evidence type="ECO:0000305" key="2"/>
<proteinExistence type="inferred from homology"/>
<gene>
    <name evidence="1" type="primary">rpsE</name>
    <name type="ordered locus">LSEI_2486</name>
</gene>
<sequence>MASFIDPNQLDLEDQVVSINRVTKVVKGGRRLRFAAIAIVGDKNGHVGFATGKAQEVPEAIRKAVDAAKKSLIEVPIVGTTIPHEVIGHFGAGEVLLKPAEEGSGVAAGGAIRSVMELAGIADITSKSLGRNTPINMIRATMDGLTQLRTREQVAELRGVSASSLED</sequence>
<reference key="1">
    <citation type="journal article" date="2006" name="Proc. Natl. Acad. Sci. U.S.A.">
        <title>Comparative genomics of the lactic acid bacteria.</title>
        <authorList>
            <person name="Makarova K.S."/>
            <person name="Slesarev A."/>
            <person name="Wolf Y.I."/>
            <person name="Sorokin A."/>
            <person name="Mirkin B."/>
            <person name="Koonin E.V."/>
            <person name="Pavlov A."/>
            <person name="Pavlova N."/>
            <person name="Karamychev V."/>
            <person name="Polouchine N."/>
            <person name="Shakhova V."/>
            <person name="Grigoriev I."/>
            <person name="Lou Y."/>
            <person name="Rohksar D."/>
            <person name="Lucas S."/>
            <person name="Huang K."/>
            <person name="Goodstein D.M."/>
            <person name="Hawkins T."/>
            <person name="Plengvidhya V."/>
            <person name="Welker D."/>
            <person name="Hughes J."/>
            <person name="Goh Y."/>
            <person name="Benson A."/>
            <person name="Baldwin K."/>
            <person name="Lee J.-H."/>
            <person name="Diaz-Muniz I."/>
            <person name="Dosti B."/>
            <person name="Smeianov V."/>
            <person name="Wechter W."/>
            <person name="Barabote R."/>
            <person name="Lorca G."/>
            <person name="Altermann E."/>
            <person name="Barrangou R."/>
            <person name="Ganesan B."/>
            <person name="Xie Y."/>
            <person name="Rawsthorne H."/>
            <person name="Tamir D."/>
            <person name="Parker C."/>
            <person name="Breidt F."/>
            <person name="Broadbent J.R."/>
            <person name="Hutkins R."/>
            <person name="O'Sullivan D."/>
            <person name="Steele J."/>
            <person name="Unlu G."/>
            <person name="Saier M.H. Jr."/>
            <person name="Klaenhammer T."/>
            <person name="Richardson P."/>
            <person name="Kozyavkin S."/>
            <person name="Weimer B.C."/>
            <person name="Mills D.A."/>
        </authorList>
    </citation>
    <scope>NUCLEOTIDE SEQUENCE [LARGE SCALE GENOMIC DNA]</scope>
    <source>
        <strain>ATCC 334 / BCRC 17002 / CCUG 31169 / CIP 107868 / KCTC 3260 / NRRL B-441</strain>
    </source>
</reference>
<comment type="function">
    <text evidence="1">With S4 and S12 plays an important role in translational accuracy.</text>
</comment>
<comment type="function">
    <text evidence="1">Located at the back of the 30S subunit body where it stabilizes the conformation of the head with respect to the body.</text>
</comment>
<comment type="subunit">
    <text evidence="1">Part of the 30S ribosomal subunit. Contacts proteins S4 and S8.</text>
</comment>
<comment type="domain">
    <text>The N-terminal domain interacts with the head of the 30S subunit; the C-terminal domain interacts with the body and contacts protein S4. The interaction surface between S4 and S5 is involved in control of translational fidelity.</text>
</comment>
<comment type="similarity">
    <text evidence="1">Belongs to the universal ribosomal protein uS5 family.</text>
</comment>
<keyword id="KW-1185">Reference proteome</keyword>
<keyword id="KW-0687">Ribonucleoprotein</keyword>
<keyword id="KW-0689">Ribosomal protein</keyword>
<keyword id="KW-0694">RNA-binding</keyword>
<keyword id="KW-0699">rRNA-binding</keyword>
<organism>
    <name type="scientific">Lacticaseibacillus paracasei (strain ATCC 334 / BCRC 17002 / CCUG 31169 / CIP 107868 / KCTC 3260 / NRRL B-441)</name>
    <name type="common">Lactobacillus paracasei</name>
    <dbReference type="NCBI Taxonomy" id="321967"/>
    <lineage>
        <taxon>Bacteria</taxon>
        <taxon>Bacillati</taxon>
        <taxon>Bacillota</taxon>
        <taxon>Bacilli</taxon>
        <taxon>Lactobacillales</taxon>
        <taxon>Lactobacillaceae</taxon>
        <taxon>Lacticaseibacillus</taxon>
    </lineage>
</organism>
<accession>Q035A0</accession>
<feature type="chain" id="PRO_0000323139" description="Small ribosomal subunit protein uS5">
    <location>
        <begin position="1"/>
        <end position="167"/>
    </location>
</feature>
<feature type="domain" description="S5 DRBM" evidence="1">
    <location>
        <begin position="12"/>
        <end position="75"/>
    </location>
</feature>
<dbReference type="EMBL" id="CP000423">
    <property type="protein sequence ID" value="ABJ71222.1"/>
    <property type="molecule type" value="Genomic_DNA"/>
</dbReference>
<dbReference type="RefSeq" id="WP_003567531.1">
    <property type="nucleotide sequence ID" value="NC_008526.1"/>
</dbReference>
<dbReference type="RefSeq" id="YP_807664.1">
    <property type="nucleotide sequence ID" value="NC_008526.1"/>
</dbReference>
<dbReference type="SMR" id="Q035A0"/>
<dbReference type="STRING" id="321967.LSEI_2486"/>
<dbReference type="PaxDb" id="321967-LSEI_2486"/>
<dbReference type="GeneID" id="57091066"/>
<dbReference type="KEGG" id="lca:LSEI_2486"/>
<dbReference type="PATRIC" id="fig|321967.11.peg.2440"/>
<dbReference type="HOGENOM" id="CLU_065898_2_2_9"/>
<dbReference type="Proteomes" id="UP000001651">
    <property type="component" value="Chromosome"/>
</dbReference>
<dbReference type="GO" id="GO:0015935">
    <property type="term" value="C:small ribosomal subunit"/>
    <property type="evidence" value="ECO:0007669"/>
    <property type="project" value="InterPro"/>
</dbReference>
<dbReference type="GO" id="GO:0019843">
    <property type="term" value="F:rRNA binding"/>
    <property type="evidence" value="ECO:0007669"/>
    <property type="project" value="UniProtKB-UniRule"/>
</dbReference>
<dbReference type="GO" id="GO:0003735">
    <property type="term" value="F:structural constituent of ribosome"/>
    <property type="evidence" value="ECO:0007669"/>
    <property type="project" value="InterPro"/>
</dbReference>
<dbReference type="GO" id="GO:0006412">
    <property type="term" value="P:translation"/>
    <property type="evidence" value="ECO:0007669"/>
    <property type="project" value="UniProtKB-UniRule"/>
</dbReference>
<dbReference type="FunFam" id="3.30.160.20:FF:000001">
    <property type="entry name" value="30S ribosomal protein S5"/>
    <property type="match status" value="1"/>
</dbReference>
<dbReference type="FunFam" id="3.30.230.10:FF:000002">
    <property type="entry name" value="30S ribosomal protein S5"/>
    <property type="match status" value="1"/>
</dbReference>
<dbReference type="Gene3D" id="3.30.160.20">
    <property type="match status" value="1"/>
</dbReference>
<dbReference type="Gene3D" id="3.30.230.10">
    <property type="match status" value="1"/>
</dbReference>
<dbReference type="HAMAP" id="MF_01307_B">
    <property type="entry name" value="Ribosomal_uS5_B"/>
    <property type="match status" value="1"/>
</dbReference>
<dbReference type="InterPro" id="IPR020568">
    <property type="entry name" value="Ribosomal_Su5_D2-typ_SF"/>
</dbReference>
<dbReference type="InterPro" id="IPR000851">
    <property type="entry name" value="Ribosomal_uS5"/>
</dbReference>
<dbReference type="InterPro" id="IPR005712">
    <property type="entry name" value="Ribosomal_uS5_bac-type"/>
</dbReference>
<dbReference type="InterPro" id="IPR005324">
    <property type="entry name" value="Ribosomal_uS5_C"/>
</dbReference>
<dbReference type="InterPro" id="IPR013810">
    <property type="entry name" value="Ribosomal_uS5_N"/>
</dbReference>
<dbReference type="InterPro" id="IPR018192">
    <property type="entry name" value="Ribosomal_uS5_N_CS"/>
</dbReference>
<dbReference type="InterPro" id="IPR014721">
    <property type="entry name" value="Ribsml_uS5_D2-typ_fold_subgr"/>
</dbReference>
<dbReference type="NCBIfam" id="TIGR01021">
    <property type="entry name" value="rpsE_bact"/>
    <property type="match status" value="1"/>
</dbReference>
<dbReference type="PANTHER" id="PTHR48277">
    <property type="entry name" value="MITOCHONDRIAL RIBOSOMAL PROTEIN S5"/>
    <property type="match status" value="1"/>
</dbReference>
<dbReference type="PANTHER" id="PTHR48277:SF1">
    <property type="entry name" value="MITOCHONDRIAL RIBOSOMAL PROTEIN S5"/>
    <property type="match status" value="1"/>
</dbReference>
<dbReference type="Pfam" id="PF00333">
    <property type="entry name" value="Ribosomal_S5"/>
    <property type="match status" value="1"/>
</dbReference>
<dbReference type="Pfam" id="PF03719">
    <property type="entry name" value="Ribosomal_S5_C"/>
    <property type="match status" value="1"/>
</dbReference>
<dbReference type="SUPFAM" id="SSF54768">
    <property type="entry name" value="dsRNA-binding domain-like"/>
    <property type="match status" value="1"/>
</dbReference>
<dbReference type="SUPFAM" id="SSF54211">
    <property type="entry name" value="Ribosomal protein S5 domain 2-like"/>
    <property type="match status" value="1"/>
</dbReference>
<dbReference type="PROSITE" id="PS00585">
    <property type="entry name" value="RIBOSOMAL_S5"/>
    <property type="match status" value="1"/>
</dbReference>
<dbReference type="PROSITE" id="PS50881">
    <property type="entry name" value="S5_DSRBD"/>
    <property type="match status" value="1"/>
</dbReference>